<feature type="chain" id="PRO_0000163670" description="1-deoxy-D-xylulose 5-phosphate reductoisomerase">
    <location>
        <begin position="1"/>
        <end position="380"/>
    </location>
</feature>
<feature type="binding site" evidence="1">
    <location>
        <position position="10"/>
    </location>
    <ligand>
        <name>NADPH</name>
        <dbReference type="ChEBI" id="CHEBI:57783"/>
    </ligand>
</feature>
<feature type="binding site" evidence="1">
    <location>
        <position position="11"/>
    </location>
    <ligand>
        <name>NADPH</name>
        <dbReference type="ChEBI" id="CHEBI:57783"/>
    </ligand>
</feature>
<feature type="binding site" evidence="1">
    <location>
        <position position="12"/>
    </location>
    <ligand>
        <name>NADPH</name>
        <dbReference type="ChEBI" id="CHEBI:57783"/>
    </ligand>
</feature>
<feature type="binding site" evidence="1">
    <location>
        <position position="13"/>
    </location>
    <ligand>
        <name>NADPH</name>
        <dbReference type="ChEBI" id="CHEBI:57783"/>
    </ligand>
</feature>
<feature type="binding site" evidence="1">
    <location>
        <position position="36"/>
    </location>
    <ligand>
        <name>NADPH</name>
        <dbReference type="ChEBI" id="CHEBI:57783"/>
    </ligand>
</feature>
<feature type="binding site" evidence="1">
    <location>
        <position position="37"/>
    </location>
    <ligand>
        <name>NADPH</name>
        <dbReference type="ChEBI" id="CHEBI:57783"/>
    </ligand>
</feature>
<feature type="binding site" evidence="1">
    <location>
        <position position="38"/>
    </location>
    <ligand>
        <name>NADPH</name>
        <dbReference type="ChEBI" id="CHEBI:57783"/>
    </ligand>
</feature>
<feature type="binding site" evidence="1">
    <location>
        <position position="120"/>
    </location>
    <ligand>
        <name>NADPH</name>
        <dbReference type="ChEBI" id="CHEBI:57783"/>
    </ligand>
</feature>
<feature type="binding site" evidence="1">
    <location>
        <position position="121"/>
    </location>
    <ligand>
        <name>1-deoxy-D-xylulose 5-phosphate</name>
        <dbReference type="ChEBI" id="CHEBI:57792"/>
    </ligand>
</feature>
<feature type="binding site" evidence="1">
    <location>
        <position position="122"/>
    </location>
    <ligand>
        <name>NADPH</name>
        <dbReference type="ChEBI" id="CHEBI:57783"/>
    </ligand>
</feature>
<feature type="binding site" evidence="1">
    <location>
        <position position="146"/>
    </location>
    <ligand>
        <name>Mn(2+)</name>
        <dbReference type="ChEBI" id="CHEBI:29035"/>
    </ligand>
</feature>
<feature type="binding site" evidence="1">
    <location>
        <position position="147"/>
    </location>
    <ligand>
        <name>1-deoxy-D-xylulose 5-phosphate</name>
        <dbReference type="ChEBI" id="CHEBI:57792"/>
    </ligand>
</feature>
<feature type="binding site" evidence="1">
    <location>
        <position position="148"/>
    </location>
    <ligand>
        <name>1-deoxy-D-xylulose 5-phosphate</name>
        <dbReference type="ChEBI" id="CHEBI:57792"/>
    </ligand>
</feature>
<feature type="binding site" evidence="1">
    <location>
        <position position="148"/>
    </location>
    <ligand>
        <name>Mn(2+)</name>
        <dbReference type="ChEBI" id="CHEBI:29035"/>
    </ligand>
</feature>
<feature type="binding site" evidence="1">
    <location>
        <position position="172"/>
    </location>
    <ligand>
        <name>1-deoxy-D-xylulose 5-phosphate</name>
        <dbReference type="ChEBI" id="CHEBI:57792"/>
    </ligand>
</feature>
<feature type="binding site" evidence="1">
    <location>
        <position position="195"/>
    </location>
    <ligand>
        <name>1-deoxy-D-xylulose 5-phosphate</name>
        <dbReference type="ChEBI" id="CHEBI:57792"/>
    </ligand>
</feature>
<feature type="binding site" evidence="1">
    <location>
        <position position="201"/>
    </location>
    <ligand>
        <name>NADPH</name>
        <dbReference type="ChEBI" id="CHEBI:57783"/>
    </ligand>
</feature>
<feature type="binding site" evidence="1">
    <location>
        <position position="208"/>
    </location>
    <ligand>
        <name>1-deoxy-D-xylulose 5-phosphate</name>
        <dbReference type="ChEBI" id="CHEBI:57792"/>
    </ligand>
</feature>
<feature type="binding site" evidence="1">
    <location>
        <position position="213"/>
    </location>
    <ligand>
        <name>1-deoxy-D-xylulose 5-phosphate</name>
        <dbReference type="ChEBI" id="CHEBI:57792"/>
    </ligand>
</feature>
<feature type="binding site" evidence="1">
    <location>
        <position position="214"/>
    </location>
    <ligand>
        <name>1-deoxy-D-xylulose 5-phosphate</name>
        <dbReference type="ChEBI" id="CHEBI:57792"/>
    </ligand>
</feature>
<feature type="binding site" evidence="1">
    <location>
        <position position="217"/>
    </location>
    <ligand>
        <name>1-deoxy-D-xylulose 5-phosphate</name>
        <dbReference type="ChEBI" id="CHEBI:57792"/>
    </ligand>
</feature>
<feature type="binding site" evidence="1">
    <location>
        <position position="217"/>
    </location>
    <ligand>
        <name>Mn(2+)</name>
        <dbReference type="ChEBI" id="CHEBI:29035"/>
    </ligand>
</feature>
<reference key="1">
    <citation type="journal article" date="2001" name="Science">
        <title>Comparative genomics of Listeria species.</title>
        <authorList>
            <person name="Glaser P."/>
            <person name="Frangeul L."/>
            <person name="Buchrieser C."/>
            <person name="Rusniok C."/>
            <person name="Amend A."/>
            <person name="Baquero F."/>
            <person name="Berche P."/>
            <person name="Bloecker H."/>
            <person name="Brandt P."/>
            <person name="Chakraborty T."/>
            <person name="Charbit A."/>
            <person name="Chetouani F."/>
            <person name="Couve E."/>
            <person name="de Daruvar A."/>
            <person name="Dehoux P."/>
            <person name="Domann E."/>
            <person name="Dominguez-Bernal G."/>
            <person name="Duchaud E."/>
            <person name="Durant L."/>
            <person name="Dussurget O."/>
            <person name="Entian K.-D."/>
            <person name="Fsihi H."/>
            <person name="Garcia-del Portillo F."/>
            <person name="Garrido P."/>
            <person name="Gautier L."/>
            <person name="Goebel W."/>
            <person name="Gomez-Lopez N."/>
            <person name="Hain T."/>
            <person name="Hauf J."/>
            <person name="Jackson D."/>
            <person name="Jones L.-M."/>
            <person name="Kaerst U."/>
            <person name="Kreft J."/>
            <person name="Kuhn M."/>
            <person name="Kunst F."/>
            <person name="Kurapkat G."/>
            <person name="Madueno E."/>
            <person name="Maitournam A."/>
            <person name="Mata Vicente J."/>
            <person name="Ng E."/>
            <person name="Nedjari H."/>
            <person name="Nordsiek G."/>
            <person name="Novella S."/>
            <person name="de Pablos B."/>
            <person name="Perez-Diaz J.-C."/>
            <person name="Purcell R."/>
            <person name="Remmel B."/>
            <person name="Rose M."/>
            <person name="Schlueter T."/>
            <person name="Simoes N."/>
            <person name="Tierrez A."/>
            <person name="Vazquez-Boland J.-A."/>
            <person name="Voss H."/>
            <person name="Wehland J."/>
            <person name="Cossart P."/>
        </authorList>
    </citation>
    <scope>NUCLEOTIDE SEQUENCE [LARGE SCALE GENOMIC DNA]</scope>
    <source>
        <strain>ATCC BAA-680 / CLIP 11262</strain>
    </source>
</reference>
<protein>
    <recommendedName>
        <fullName evidence="1">1-deoxy-D-xylulose 5-phosphate reductoisomerase</fullName>
        <shortName evidence="1">DXP reductoisomerase</shortName>
        <ecNumber evidence="1">1.1.1.267</ecNumber>
    </recommendedName>
    <alternativeName>
        <fullName evidence="1">1-deoxyxylulose-5-phosphate reductoisomerase</fullName>
    </alternativeName>
    <alternativeName>
        <fullName evidence="1">2-C-methyl-D-erythritol 4-phosphate synthase</fullName>
    </alternativeName>
</protein>
<sequence>MKKIILLGATGSIGTQTLTIIRENPEKFQLVAFSFGRNIERGRAIIQEFKPKMVAVWHTRDRVTLESEFPDVKFFNGLDGLREVATYLDGDVLLNAVMGSVGLLPTLDAIEAGKAIAIANKETLVTAGHLVMQAAKEKNISLLPVDSEHSAILQALNGENRERIEKIILTASGGSFRDKTREQLSEVTVKEALKHPNWNMGNKLTIDSATMFNKGLEVMEAHWLFGVDYDDIEVVIQRESIVHSMVQFVDGSFIAQLGTPDMRMPIQYALTYPDRLSIPYEKEFRITDFSALHFEEVNYERFPALKLAYNAGKIGGTMPTVLNAANEIAVAGFLNGQVAFYNIEALVENAMNRHTSISNPNLDTILQVDQETRAYVKTLL</sequence>
<evidence type="ECO:0000255" key="1">
    <source>
        <dbReference type="HAMAP-Rule" id="MF_00183"/>
    </source>
</evidence>
<gene>
    <name evidence="1" type="primary">dxr</name>
    <name type="ordered locus">lin1354</name>
</gene>
<proteinExistence type="inferred from homology"/>
<name>DXR_LISIN</name>
<dbReference type="EC" id="1.1.1.267" evidence="1"/>
<dbReference type="EMBL" id="AL596168">
    <property type="protein sequence ID" value="CAC96585.1"/>
    <property type="molecule type" value="Genomic_DNA"/>
</dbReference>
<dbReference type="PIR" id="AI1601">
    <property type="entry name" value="AI1601"/>
</dbReference>
<dbReference type="RefSeq" id="WP_003762042.1">
    <property type="nucleotide sequence ID" value="NC_003212.1"/>
</dbReference>
<dbReference type="SMR" id="Q92C37"/>
<dbReference type="STRING" id="272626.gene:17565685"/>
<dbReference type="GeneID" id="93234734"/>
<dbReference type="KEGG" id="lin:lin1354"/>
<dbReference type="eggNOG" id="COG0743">
    <property type="taxonomic scope" value="Bacteria"/>
</dbReference>
<dbReference type="HOGENOM" id="CLU_035714_4_0_9"/>
<dbReference type="OrthoDB" id="9806546at2"/>
<dbReference type="UniPathway" id="UPA00056">
    <property type="reaction ID" value="UER00092"/>
</dbReference>
<dbReference type="Proteomes" id="UP000002513">
    <property type="component" value="Chromosome"/>
</dbReference>
<dbReference type="GO" id="GO:0030604">
    <property type="term" value="F:1-deoxy-D-xylulose-5-phosphate reductoisomerase activity"/>
    <property type="evidence" value="ECO:0007669"/>
    <property type="project" value="UniProtKB-UniRule"/>
</dbReference>
<dbReference type="GO" id="GO:0030145">
    <property type="term" value="F:manganese ion binding"/>
    <property type="evidence" value="ECO:0007669"/>
    <property type="project" value="TreeGrafter"/>
</dbReference>
<dbReference type="GO" id="GO:0070402">
    <property type="term" value="F:NADPH binding"/>
    <property type="evidence" value="ECO:0007669"/>
    <property type="project" value="InterPro"/>
</dbReference>
<dbReference type="GO" id="GO:0051484">
    <property type="term" value="P:isopentenyl diphosphate biosynthetic process, methylerythritol 4-phosphate pathway involved in terpenoid biosynthetic process"/>
    <property type="evidence" value="ECO:0007669"/>
    <property type="project" value="TreeGrafter"/>
</dbReference>
<dbReference type="FunFam" id="1.10.1740.10:FF:000005">
    <property type="entry name" value="1-deoxy-D-xylulose 5-phosphate reductoisomerase"/>
    <property type="match status" value="1"/>
</dbReference>
<dbReference type="FunFam" id="3.40.50.720:FF:000045">
    <property type="entry name" value="1-deoxy-D-xylulose 5-phosphate reductoisomerase"/>
    <property type="match status" value="1"/>
</dbReference>
<dbReference type="Gene3D" id="1.10.1740.10">
    <property type="match status" value="1"/>
</dbReference>
<dbReference type="Gene3D" id="3.40.50.720">
    <property type="entry name" value="NAD(P)-binding Rossmann-like Domain"/>
    <property type="match status" value="1"/>
</dbReference>
<dbReference type="HAMAP" id="MF_00183">
    <property type="entry name" value="DXP_reductoisom"/>
    <property type="match status" value="1"/>
</dbReference>
<dbReference type="InterPro" id="IPR003821">
    <property type="entry name" value="DXP_reductoisomerase"/>
</dbReference>
<dbReference type="InterPro" id="IPR013644">
    <property type="entry name" value="DXP_reductoisomerase_C"/>
</dbReference>
<dbReference type="InterPro" id="IPR013512">
    <property type="entry name" value="DXP_reductoisomerase_N"/>
</dbReference>
<dbReference type="InterPro" id="IPR026877">
    <property type="entry name" value="DXPR_C"/>
</dbReference>
<dbReference type="InterPro" id="IPR036169">
    <property type="entry name" value="DXPR_C_sf"/>
</dbReference>
<dbReference type="InterPro" id="IPR036291">
    <property type="entry name" value="NAD(P)-bd_dom_sf"/>
</dbReference>
<dbReference type="NCBIfam" id="TIGR00243">
    <property type="entry name" value="Dxr"/>
    <property type="match status" value="1"/>
</dbReference>
<dbReference type="NCBIfam" id="NF009114">
    <property type="entry name" value="PRK12464.1"/>
    <property type="match status" value="1"/>
</dbReference>
<dbReference type="PANTHER" id="PTHR30525">
    <property type="entry name" value="1-DEOXY-D-XYLULOSE 5-PHOSPHATE REDUCTOISOMERASE"/>
    <property type="match status" value="1"/>
</dbReference>
<dbReference type="PANTHER" id="PTHR30525:SF0">
    <property type="entry name" value="1-DEOXY-D-XYLULOSE 5-PHOSPHATE REDUCTOISOMERASE, CHLOROPLASTIC"/>
    <property type="match status" value="1"/>
</dbReference>
<dbReference type="Pfam" id="PF08436">
    <property type="entry name" value="DXP_redisom_C"/>
    <property type="match status" value="1"/>
</dbReference>
<dbReference type="Pfam" id="PF02670">
    <property type="entry name" value="DXP_reductoisom"/>
    <property type="match status" value="1"/>
</dbReference>
<dbReference type="Pfam" id="PF13288">
    <property type="entry name" value="DXPR_C"/>
    <property type="match status" value="1"/>
</dbReference>
<dbReference type="PIRSF" id="PIRSF006205">
    <property type="entry name" value="Dxp_reductismrs"/>
    <property type="match status" value="1"/>
</dbReference>
<dbReference type="SUPFAM" id="SSF69055">
    <property type="entry name" value="1-deoxy-D-xylulose-5-phosphate reductoisomerase, C-terminal domain"/>
    <property type="match status" value="1"/>
</dbReference>
<dbReference type="SUPFAM" id="SSF55347">
    <property type="entry name" value="Glyceraldehyde-3-phosphate dehydrogenase-like, C-terminal domain"/>
    <property type="match status" value="1"/>
</dbReference>
<dbReference type="SUPFAM" id="SSF51735">
    <property type="entry name" value="NAD(P)-binding Rossmann-fold domains"/>
    <property type="match status" value="1"/>
</dbReference>
<accession>Q92C37</accession>
<keyword id="KW-0414">Isoprene biosynthesis</keyword>
<keyword id="KW-0464">Manganese</keyword>
<keyword id="KW-0479">Metal-binding</keyword>
<keyword id="KW-0521">NADP</keyword>
<keyword id="KW-0560">Oxidoreductase</keyword>
<organism>
    <name type="scientific">Listeria innocua serovar 6a (strain ATCC BAA-680 / CLIP 11262)</name>
    <dbReference type="NCBI Taxonomy" id="272626"/>
    <lineage>
        <taxon>Bacteria</taxon>
        <taxon>Bacillati</taxon>
        <taxon>Bacillota</taxon>
        <taxon>Bacilli</taxon>
        <taxon>Bacillales</taxon>
        <taxon>Listeriaceae</taxon>
        <taxon>Listeria</taxon>
    </lineage>
</organism>
<comment type="function">
    <text evidence="1">Catalyzes the NADPH-dependent rearrangement and reduction of 1-deoxy-D-xylulose-5-phosphate (DXP) to 2-C-methyl-D-erythritol 4-phosphate (MEP).</text>
</comment>
<comment type="catalytic activity">
    <reaction evidence="1">
        <text>2-C-methyl-D-erythritol 4-phosphate + NADP(+) = 1-deoxy-D-xylulose 5-phosphate + NADPH + H(+)</text>
        <dbReference type="Rhea" id="RHEA:13717"/>
        <dbReference type="ChEBI" id="CHEBI:15378"/>
        <dbReference type="ChEBI" id="CHEBI:57783"/>
        <dbReference type="ChEBI" id="CHEBI:57792"/>
        <dbReference type="ChEBI" id="CHEBI:58262"/>
        <dbReference type="ChEBI" id="CHEBI:58349"/>
        <dbReference type="EC" id="1.1.1.267"/>
    </reaction>
    <physiologicalReaction direction="right-to-left" evidence="1">
        <dbReference type="Rhea" id="RHEA:13719"/>
    </physiologicalReaction>
</comment>
<comment type="cofactor">
    <cofactor evidence="1">
        <name>Mg(2+)</name>
        <dbReference type="ChEBI" id="CHEBI:18420"/>
    </cofactor>
    <cofactor evidence="1">
        <name>Mn(2+)</name>
        <dbReference type="ChEBI" id="CHEBI:29035"/>
    </cofactor>
</comment>
<comment type="pathway">
    <text evidence="1">Isoprenoid biosynthesis; isopentenyl diphosphate biosynthesis via DXP pathway; isopentenyl diphosphate from 1-deoxy-D-xylulose 5-phosphate: step 1/6.</text>
</comment>
<comment type="similarity">
    <text evidence="1">Belongs to the DXR family.</text>
</comment>